<feature type="chain" id="PRO_0000091948" description="High-affinity branched-chain amino acid transport ATP-binding protein BraF">
    <location>
        <begin position="1"/>
        <end position="255"/>
    </location>
</feature>
<feature type="domain" description="ABC transporter" evidence="1">
    <location>
        <begin position="6"/>
        <end position="254"/>
    </location>
</feature>
<feature type="binding site" evidence="1">
    <location>
        <begin position="38"/>
        <end position="45"/>
    </location>
    <ligand>
        <name>ATP</name>
        <dbReference type="ChEBI" id="CHEBI:30616"/>
    </ligand>
</feature>
<sequence>MSRPILEVSGLTMRFGGLLAVNGVNLKVEEKQVVSMIGPNGAGKTTVFNCLTGFYQPTGGLIRLDGEEIQGLPGHKIARKGVVRTFQNVRLFKEMTAVENLLVAQHRHLNTNFLAGLFKTPAFRRSEREAMEYAAHWLEEVNLTEFANRSAGTLAYGQQRRLEIARCMMTRPRILMLDEPAAGLNPKETDDLKALIAKLRSEHNVTVLLIEHDMKLVMSISDHIVVINQGAPLADGTPEQIRDNPDVIKAYLGEA</sequence>
<dbReference type="EMBL" id="D90223">
    <property type="protein sequence ID" value="BAA14257.1"/>
    <property type="molecule type" value="Genomic_DNA"/>
</dbReference>
<dbReference type="EMBL" id="AE004091">
    <property type="protein sequence ID" value="AAG04460.1"/>
    <property type="molecule type" value="Genomic_DNA"/>
</dbReference>
<dbReference type="PIR" id="D36125">
    <property type="entry name" value="D36125"/>
</dbReference>
<dbReference type="RefSeq" id="NP_249762.1">
    <property type="nucleotide sequence ID" value="NC_002516.2"/>
</dbReference>
<dbReference type="SMR" id="P21629"/>
<dbReference type="FunCoup" id="P21629">
    <property type="interactions" value="384"/>
</dbReference>
<dbReference type="STRING" id="208964.PA1071"/>
<dbReference type="TCDB" id="3.A.1.4.8">
    <property type="family name" value="the atp-binding cassette (abc) superfamily"/>
</dbReference>
<dbReference type="PaxDb" id="208964-PA1071"/>
<dbReference type="DNASU" id="878078"/>
<dbReference type="GeneID" id="878078"/>
<dbReference type="KEGG" id="pae:PA1071"/>
<dbReference type="PATRIC" id="fig|208964.12.peg.1109"/>
<dbReference type="PseudoCAP" id="PA1071"/>
<dbReference type="HOGENOM" id="CLU_000604_1_2_6"/>
<dbReference type="InParanoid" id="P21629"/>
<dbReference type="OrthoDB" id="9805514at2"/>
<dbReference type="PhylomeDB" id="P21629"/>
<dbReference type="BioCyc" id="PAER208964:G1FZ6-1094-MONOMER"/>
<dbReference type="Proteomes" id="UP000002438">
    <property type="component" value="Chromosome"/>
</dbReference>
<dbReference type="GO" id="GO:0005886">
    <property type="term" value="C:plasma membrane"/>
    <property type="evidence" value="ECO:0000318"/>
    <property type="project" value="GO_Central"/>
</dbReference>
<dbReference type="GO" id="GO:0005524">
    <property type="term" value="F:ATP binding"/>
    <property type="evidence" value="ECO:0007669"/>
    <property type="project" value="UniProtKB-KW"/>
</dbReference>
<dbReference type="GO" id="GO:0016887">
    <property type="term" value="F:ATP hydrolysis activity"/>
    <property type="evidence" value="ECO:0007669"/>
    <property type="project" value="InterPro"/>
</dbReference>
<dbReference type="GO" id="GO:0015188">
    <property type="term" value="F:L-isoleucine transmembrane transporter activity"/>
    <property type="evidence" value="ECO:0000318"/>
    <property type="project" value="GO_Central"/>
</dbReference>
<dbReference type="GO" id="GO:0015192">
    <property type="term" value="F:L-phenylalanine transmembrane transporter activity"/>
    <property type="evidence" value="ECO:0000318"/>
    <property type="project" value="GO_Central"/>
</dbReference>
<dbReference type="GO" id="GO:0005304">
    <property type="term" value="F:L-valine transmembrane transporter activity"/>
    <property type="evidence" value="ECO:0000318"/>
    <property type="project" value="GO_Central"/>
</dbReference>
<dbReference type="GO" id="GO:0042941">
    <property type="term" value="P:D-alanine transmembrane transport"/>
    <property type="evidence" value="ECO:0000315"/>
    <property type="project" value="PseudoCAP"/>
</dbReference>
<dbReference type="GO" id="GO:0015808">
    <property type="term" value="P:L-alanine transport"/>
    <property type="evidence" value="ECO:0000315"/>
    <property type="project" value="PseudoCAP"/>
</dbReference>
<dbReference type="GO" id="GO:1903806">
    <property type="term" value="P:L-isoleucine import across plasma membrane"/>
    <property type="evidence" value="ECO:0000315"/>
    <property type="project" value="PseudoCAP"/>
</dbReference>
<dbReference type="GO" id="GO:1903805">
    <property type="term" value="P:L-valine import across plasma membrane"/>
    <property type="evidence" value="ECO:0000315"/>
    <property type="project" value="PseudoCAP"/>
</dbReference>
<dbReference type="CDD" id="cd03219">
    <property type="entry name" value="ABC_Mj1267_LivG_branched"/>
    <property type="match status" value="1"/>
</dbReference>
<dbReference type="FunFam" id="3.40.50.300:FF:000317">
    <property type="entry name" value="Amino acid ABC transporter ATP-binding protein"/>
    <property type="match status" value="1"/>
</dbReference>
<dbReference type="Gene3D" id="3.40.50.300">
    <property type="entry name" value="P-loop containing nucleotide triphosphate hydrolases"/>
    <property type="match status" value="1"/>
</dbReference>
<dbReference type="InterPro" id="IPR003593">
    <property type="entry name" value="AAA+_ATPase"/>
</dbReference>
<dbReference type="InterPro" id="IPR051120">
    <property type="entry name" value="ABC_AA/LPS_Transport"/>
</dbReference>
<dbReference type="InterPro" id="IPR003439">
    <property type="entry name" value="ABC_transporter-like_ATP-bd"/>
</dbReference>
<dbReference type="InterPro" id="IPR017871">
    <property type="entry name" value="ABC_transporter-like_CS"/>
</dbReference>
<dbReference type="InterPro" id="IPR032823">
    <property type="entry name" value="BCA_ABC_TP_C"/>
</dbReference>
<dbReference type="InterPro" id="IPR027417">
    <property type="entry name" value="P-loop_NTPase"/>
</dbReference>
<dbReference type="NCBIfam" id="NF008449">
    <property type="entry name" value="PRK11300.1"/>
    <property type="match status" value="1"/>
</dbReference>
<dbReference type="PANTHER" id="PTHR45772">
    <property type="entry name" value="CONSERVED COMPONENT OF ABC TRANSPORTER FOR NATURAL AMINO ACIDS-RELATED"/>
    <property type="match status" value="1"/>
</dbReference>
<dbReference type="PANTHER" id="PTHR45772:SF11">
    <property type="entry name" value="HIGH-AFFINITY BRANCHED-CHAIN AMINO ACID TRANSPORT ATP-BINDING PROTEIN LIVG"/>
    <property type="match status" value="1"/>
</dbReference>
<dbReference type="Pfam" id="PF00005">
    <property type="entry name" value="ABC_tran"/>
    <property type="match status" value="1"/>
</dbReference>
<dbReference type="Pfam" id="PF12399">
    <property type="entry name" value="BCA_ABC_TP_C"/>
    <property type="match status" value="1"/>
</dbReference>
<dbReference type="SMART" id="SM00382">
    <property type="entry name" value="AAA"/>
    <property type="match status" value="1"/>
</dbReference>
<dbReference type="SUPFAM" id="SSF52540">
    <property type="entry name" value="P-loop containing nucleoside triphosphate hydrolases"/>
    <property type="match status" value="1"/>
</dbReference>
<dbReference type="PROSITE" id="PS00211">
    <property type="entry name" value="ABC_TRANSPORTER_1"/>
    <property type="match status" value="1"/>
</dbReference>
<dbReference type="PROSITE" id="PS50893">
    <property type="entry name" value="ABC_TRANSPORTER_2"/>
    <property type="match status" value="1"/>
</dbReference>
<proteinExistence type="inferred from homology"/>
<organism>
    <name type="scientific">Pseudomonas aeruginosa (strain ATCC 15692 / DSM 22644 / CIP 104116 / JCM 14847 / LMG 12228 / 1C / PRS 101 / PAO1)</name>
    <dbReference type="NCBI Taxonomy" id="208964"/>
    <lineage>
        <taxon>Bacteria</taxon>
        <taxon>Pseudomonadati</taxon>
        <taxon>Pseudomonadota</taxon>
        <taxon>Gammaproteobacteria</taxon>
        <taxon>Pseudomonadales</taxon>
        <taxon>Pseudomonadaceae</taxon>
        <taxon>Pseudomonas</taxon>
    </lineage>
</organism>
<keyword id="KW-0029">Amino-acid transport</keyword>
<keyword id="KW-0067">ATP-binding</keyword>
<keyword id="KW-0997">Cell inner membrane</keyword>
<keyword id="KW-1003">Cell membrane</keyword>
<keyword id="KW-0472">Membrane</keyword>
<keyword id="KW-0547">Nucleotide-binding</keyword>
<keyword id="KW-1185">Reference proteome</keyword>
<keyword id="KW-0813">Transport</keyword>
<accession>P21629</accession>
<name>BRAF_PSEAE</name>
<reference key="1">
    <citation type="journal article" date="1990" name="J. Bacteriol.">
        <title>Cloning, nucleotide sequences, and identification of products of the Pseudomonas aeruginosa PAO bra genes, which encode the high-affinity branched-chain amino acid transport system.</title>
        <authorList>
            <person name="Hoshino T."/>
            <person name="Kose K."/>
        </authorList>
    </citation>
    <scope>NUCLEOTIDE SEQUENCE [GENOMIC DNA]</scope>
    <source>
        <strain>PAO</strain>
    </source>
</reference>
<reference key="2">
    <citation type="journal article" date="2000" name="Nature">
        <title>Complete genome sequence of Pseudomonas aeruginosa PAO1, an opportunistic pathogen.</title>
        <authorList>
            <person name="Stover C.K."/>
            <person name="Pham X.-Q.T."/>
            <person name="Erwin A.L."/>
            <person name="Mizoguchi S.D."/>
            <person name="Warrener P."/>
            <person name="Hickey M.J."/>
            <person name="Brinkman F.S.L."/>
            <person name="Hufnagle W.O."/>
            <person name="Kowalik D.J."/>
            <person name="Lagrou M."/>
            <person name="Garber R.L."/>
            <person name="Goltry L."/>
            <person name="Tolentino E."/>
            <person name="Westbrock-Wadman S."/>
            <person name="Yuan Y."/>
            <person name="Brody L.L."/>
            <person name="Coulter S.N."/>
            <person name="Folger K.R."/>
            <person name="Kas A."/>
            <person name="Larbig K."/>
            <person name="Lim R.M."/>
            <person name="Smith K.A."/>
            <person name="Spencer D.H."/>
            <person name="Wong G.K.-S."/>
            <person name="Wu Z."/>
            <person name="Paulsen I.T."/>
            <person name="Reizer J."/>
            <person name="Saier M.H. Jr."/>
            <person name="Hancock R.E.W."/>
            <person name="Lory S."/>
            <person name="Olson M.V."/>
        </authorList>
    </citation>
    <scope>NUCLEOTIDE SEQUENCE [LARGE SCALE GENOMIC DNA]</scope>
    <source>
        <strain>ATCC 15692 / DSM 22644 / CIP 104116 / JCM 14847 / LMG 12228 / 1C / PRS 101 / PAO1</strain>
    </source>
</reference>
<gene>
    <name type="primary">braF</name>
    <name type="ordered locus">PA1071</name>
</gene>
<protein>
    <recommendedName>
        <fullName>High-affinity branched-chain amino acid transport ATP-binding protein BraF</fullName>
    </recommendedName>
</protein>
<evidence type="ECO:0000255" key="1">
    <source>
        <dbReference type="PROSITE-ProRule" id="PRU00434"/>
    </source>
</evidence>
<evidence type="ECO:0000305" key="2"/>
<comment type="function">
    <text>Component of the high affinity leucine, isoleucine, valine, transport system (LIV-I), which is operative without Na(+) and is specific for alanine and threonine, in addition to branched-chain amino acids.</text>
</comment>
<comment type="subcellular location">
    <subcellularLocation>
        <location evidence="2">Cell inner membrane</location>
        <topology evidence="2">Peripheral membrane protein</topology>
    </subcellularLocation>
</comment>
<comment type="similarity">
    <text evidence="2">Belongs to the ABC transporter superfamily.</text>
</comment>